<gene>
    <name evidence="2" type="primary">yqhI</name>
    <name type="ordered locus">b4755</name>
</gene>
<proteinExistence type="evidence at protein level"/>
<protein>
    <recommendedName>
        <fullName evidence="2">Protein YqhI</fullName>
    </recommendedName>
</protein>
<feature type="chain" id="PRO_0000445184" description="Protein YqhI">
    <location>
        <begin position="1"/>
        <end position="47"/>
    </location>
</feature>
<organism>
    <name type="scientific">Escherichia coli (strain K12)</name>
    <dbReference type="NCBI Taxonomy" id="83333"/>
    <lineage>
        <taxon>Bacteria</taxon>
        <taxon>Pseudomonadati</taxon>
        <taxon>Pseudomonadota</taxon>
        <taxon>Gammaproteobacteria</taxon>
        <taxon>Enterobacterales</taxon>
        <taxon>Enterobacteriaceae</taxon>
        <taxon>Escherichia</taxon>
    </lineage>
</organism>
<keyword id="KW-1185">Reference proteome</keyword>
<dbReference type="EMBL" id="U00096">
    <property type="protein sequence ID" value="AYC08244.1"/>
    <property type="molecule type" value="Genomic_DNA"/>
</dbReference>
<dbReference type="SMR" id="P0DPP6"/>
<dbReference type="EnsemblBacteria" id="AYC08244">
    <property type="protein sequence ID" value="AYC08244"/>
    <property type="gene ID" value="b4755"/>
</dbReference>
<dbReference type="InParanoid" id="P0DPP6"/>
<dbReference type="OrthoDB" id="9787933at2"/>
<dbReference type="BioCyc" id="EcoCyc:MONOMER0-4433"/>
<dbReference type="PRO" id="PR:P0DPP6"/>
<dbReference type="Proteomes" id="UP000000625">
    <property type="component" value="Chromosome"/>
</dbReference>
<dbReference type="Pfam" id="PF23678">
    <property type="entry name" value="YqhI"/>
    <property type="match status" value="1"/>
</dbReference>
<accession>P0DPP6</accession>
<accession>A0A385XJP4</accession>
<comment type="induction">
    <text evidence="1">Expressed during stationary phase (at protein level).</text>
</comment>
<evidence type="ECO:0000269" key="1">
    <source>
    </source>
</evidence>
<evidence type="ECO:0000303" key="2">
    <source>
    </source>
</evidence>
<name>YQHI_ECOLI</name>
<reference key="1">
    <citation type="journal article" date="1997" name="Science">
        <title>The complete genome sequence of Escherichia coli K-12.</title>
        <authorList>
            <person name="Blattner F.R."/>
            <person name="Plunkett G. III"/>
            <person name="Bloch C.A."/>
            <person name="Perna N.T."/>
            <person name="Burland V."/>
            <person name="Riley M."/>
            <person name="Collado-Vides J."/>
            <person name="Glasner J.D."/>
            <person name="Rode C.K."/>
            <person name="Mayhew G.F."/>
            <person name="Gregor J."/>
            <person name="Davis N.W."/>
            <person name="Kirkpatrick H.A."/>
            <person name="Goeden M.A."/>
            <person name="Rose D.J."/>
            <person name="Mau B."/>
            <person name="Shao Y."/>
        </authorList>
    </citation>
    <scope>NUCLEOTIDE SEQUENCE [LARGE SCALE GENOMIC DNA]</scope>
    <source>
        <strain>K12 / MG1655 / ATCC 47076</strain>
    </source>
</reference>
<reference key="2">
    <citation type="journal article" date="2018" name="Proteomics">
        <title>Identifying new small proteins in Escherichia coli.</title>
        <authorList>
            <person name="VanOrsdel C.E."/>
            <person name="Kelly J.P."/>
            <person name="Burke B.N."/>
            <person name="Lein C.D."/>
            <person name="Oufiero C.E."/>
            <person name="Sanchez J.F."/>
            <person name="Wimmers L.E."/>
            <person name="Hearn D.J."/>
            <person name="Abuikhdair F.J."/>
            <person name="Barnhart K.R."/>
            <person name="Duley M.L."/>
            <person name="Ernst S.E.G."/>
            <person name="Kenerson B.A."/>
            <person name="Serafin A.J."/>
            <person name="Hemm M.R."/>
        </authorList>
    </citation>
    <scope>IDENTIFICATION</scope>
    <scope>INDUCTION</scope>
</reference>
<sequence length="47" mass="5465">MPRLTAKDFPQELLDYYDYYAHGKISKREFLNLAAKCGRRDDGISVV</sequence>